<dbReference type="EC" id="3.6.5.2" evidence="1"/>
<dbReference type="EMBL" id="Z12125">
    <property type="protein sequence ID" value="CAA78108.1"/>
    <property type="molecule type" value="mRNA"/>
</dbReference>
<dbReference type="PIR" id="S31720">
    <property type="entry name" value="S31720"/>
</dbReference>
<dbReference type="RefSeq" id="NP_001028153.1">
    <property type="nucleotide sequence ID" value="NM_001032981.2"/>
</dbReference>
<dbReference type="BMRB" id="Q07983"/>
<dbReference type="SMR" id="Q07983"/>
<dbReference type="STRING" id="13616.ENSMODP00000037491"/>
<dbReference type="GeneID" id="554186"/>
<dbReference type="KEGG" id="mdo:554186"/>
<dbReference type="CTD" id="3845"/>
<dbReference type="eggNOG" id="KOG0395">
    <property type="taxonomic scope" value="Eukaryota"/>
</dbReference>
<dbReference type="InParanoid" id="Q07983"/>
<dbReference type="OrthoDB" id="5976022at2759"/>
<dbReference type="Proteomes" id="UP000002280">
    <property type="component" value="Unplaced"/>
</dbReference>
<dbReference type="GO" id="GO:0005737">
    <property type="term" value="C:cytoplasm"/>
    <property type="evidence" value="ECO:0000250"/>
    <property type="project" value="UniProtKB"/>
</dbReference>
<dbReference type="GO" id="GO:0009898">
    <property type="term" value="C:cytoplasmic side of plasma membrane"/>
    <property type="evidence" value="ECO:0000250"/>
    <property type="project" value="UniProtKB"/>
</dbReference>
<dbReference type="GO" id="GO:0005829">
    <property type="term" value="C:cytosol"/>
    <property type="evidence" value="ECO:0007669"/>
    <property type="project" value="UniProtKB-SubCell"/>
</dbReference>
<dbReference type="GO" id="GO:0005886">
    <property type="term" value="C:plasma membrane"/>
    <property type="evidence" value="ECO:0000318"/>
    <property type="project" value="GO_Central"/>
</dbReference>
<dbReference type="GO" id="GO:0003925">
    <property type="term" value="F:G protein activity"/>
    <property type="evidence" value="ECO:0007669"/>
    <property type="project" value="UniProtKB-EC"/>
</dbReference>
<dbReference type="GO" id="GO:0019003">
    <property type="term" value="F:GDP binding"/>
    <property type="evidence" value="ECO:0000318"/>
    <property type="project" value="GO_Central"/>
</dbReference>
<dbReference type="GO" id="GO:0005525">
    <property type="term" value="F:GTP binding"/>
    <property type="evidence" value="ECO:0000318"/>
    <property type="project" value="GO_Central"/>
</dbReference>
<dbReference type="GO" id="GO:0003924">
    <property type="term" value="F:GTPase activity"/>
    <property type="evidence" value="ECO:0000318"/>
    <property type="project" value="GO_Central"/>
</dbReference>
<dbReference type="GO" id="GO:0007265">
    <property type="term" value="P:Ras protein signal transduction"/>
    <property type="evidence" value="ECO:0000318"/>
    <property type="project" value="GO_Central"/>
</dbReference>
<dbReference type="CDD" id="cd04138">
    <property type="entry name" value="H_N_K_Ras_like"/>
    <property type="match status" value="1"/>
</dbReference>
<dbReference type="FunFam" id="3.40.50.300:FF:000096">
    <property type="entry name" value="KRAS proto-oncogene, GTPase"/>
    <property type="match status" value="1"/>
</dbReference>
<dbReference type="Gene3D" id="3.40.50.300">
    <property type="entry name" value="P-loop containing nucleotide triphosphate hydrolases"/>
    <property type="match status" value="1"/>
</dbReference>
<dbReference type="InterPro" id="IPR027417">
    <property type="entry name" value="P-loop_NTPase"/>
</dbReference>
<dbReference type="InterPro" id="IPR005225">
    <property type="entry name" value="Small_GTP-bd"/>
</dbReference>
<dbReference type="InterPro" id="IPR001806">
    <property type="entry name" value="Small_GTPase"/>
</dbReference>
<dbReference type="InterPro" id="IPR020849">
    <property type="entry name" value="Small_GTPase_Ras-type"/>
</dbReference>
<dbReference type="NCBIfam" id="TIGR00231">
    <property type="entry name" value="small_GTP"/>
    <property type="match status" value="1"/>
</dbReference>
<dbReference type="PANTHER" id="PTHR24070">
    <property type="entry name" value="RAS, DI-RAS, AND RHEB FAMILY MEMBERS OF SMALL GTPASE SUPERFAMILY"/>
    <property type="match status" value="1"/>
</dbReference>
<dbReference type="Pfam" id="PF00071">
    <property type="entry name" value="Ras"/>
    <property type="match status" value="1"/>
</dbReference>
<dbReference type="PRINTS" id="PR00449">
    <property type="entry name" value="RASTRNSFRMNG"/>
</dbReference>
<dbReference type="SMART" id="SM00175">
    <property type="entry name" value="RAB"/>
    <property type="match status" value="1"/>
</dbReference>
<dbReference type="SMART" id="SM00173">
    <property type="entry name" value="RAS"/>
    <property type="match status" value="1"/>
</dbReference>
<dbReference type="SMART" id="SM00174">
    <property type="entry name" value="RHO"/>
    <property type="match status" value="1"/>
</dbReference>
<dbReference type="SUPFAM" id="SSF52540">
    <property type="entry name" value="P-loop containing nucleoside triphosphate hydrolases"/>
    <property type="match status" value="1"/>
</dbReference>
<dbReference type="PROSITE" id="PS51421">
    <property type="entry name" value="RAS"/>
    <property type="match status" value="1"/>
</dbReference>
<accession>Q07983</accession>
<keyword id="KW-0007">Acetylation</keyword>
<keyword id="KW-1003">Cell membrane</keyword>
<keyword id="KW-0963">Cytoplasm</keyword>
<keyword id="KW-0225">Disease variant</keyword>
<keyword id="KW-0342">GTP-binding</keyword>
<keyword id="KW-0378">Hydrolase</keyword>
<keyword id="KW-0449">Lipoprotein</keyword>
<keyword id="KW-0472">Membrane</keyword>
<keyword id="KW-0488">Methylation</keyword>
<keyword id="KW-0547">Nucleotide-binding</keyword>
<keyword id="KW-0636">Prenylation</keyword>
<keyword id="KW-0656">Proto-oncogene</keyword>
<keyword id="KW-1185">Reference proteome</keyword>
<feature type="chain" id="PRO_0000326481" description="GTPase KRas">
    <location>
        <begin position="1"/>
        <end position="185"/>
    </location>
</feature>
<feature type="initiator methionine" description="Removed; alternate" evidence="1">
    <location>
        <position position="1"/>
    </location>
</feature>
<feature type="chain" id="PRO_0000082642" description="GTPase KRas, N-terminally processed">
    <location>
        <begin position="2"/>
        <end position="185"/>
    </location>
</feature>
<feature type="propeptide" id="PRO_0000281292" description="Removed in mature form" evidence="1">
    <location>
        <begin position="186"/>
        <end position="188"/>
    </location>
</feature>
<feature type="region of interest" description="Hypervariable region">
    <location>
        <begin position="166"/>
        <end position="185"/>
    </location>
</feature>
<feature type="region of interest" description="Disordered" evidence="3">
    <location>
        <begin position="167"/>
        <end position="188"/>
    </location>
</feature>
<feature type="short sequence motif" description="Effector region">
    <location>
        <begin position="32"/>
        <end position="40"/>
    </location>
</feature>
<feature type="binding site" evidence="1">
    <location>
        <begin position="10"/>
        <end position="18"/>
    </location>
    <ligand>
        <name>GTP</name>
        <dbReference type="ChEBI" id="CHEBI:37565"/>
    </ligand>
</feature>
<feature type="binding site" evidence="1">
    <location>
        <begin position="29"/>
        <end position="35"/>
    </location>
    <ligand>
        <name>GTP</name>
        <dbReference type="ChEBI" id="CHEBI:37565"/>
    </ligand>
</feature>
<feature type="binding site" evidence="1">
    <location>
        <begin position="59"/>
        <end position="60"/>
    </location>
    <ligand>
        <name>GTP</name>
        <dbReference type="ChEBI" id="CHEBI:37565"/>
    </ligand>
</feature>
<feature type="binding site" evidence="1">
    <location>
        <begin position="116"/>
        <end position="119"/>
    </location>
    <ligand>
        <name>GTP</name>
        <dbReference type="ChEBI" id="CHEBI:37565"/>
    </ligand>
</feature>
<feature type="modified residue" description="N-acetylmethionine" evidence="1">
    <location>
        <position position="1"/>
    </location>
</feature>
<feature type="modified residue" description="N-acetylthreonine; in GTPase KRas, N-terminally processed" evidence="1">
    <location>
        <position position="2"/>
    </location>
</feature>
<feature type="modified residue" description="N6-acetyllysine" evidence="1">
    <location>
        <position position="104"/>
    </location>
</feature>
<feature type="modified residue" description="Cysteine methyl ester" evidence="1">
    <location>
        <position position="185"/>
    </location>
</feature>
<feature type="lipid moiety-binding region" description="S-farnesyl cysteine" evidence="1">
    <location>
        <position position="185"/>
    </location>
</feature>
<feature type="sequence variant" description="In UVR-induced corneal tumor.">
    <original>Q</original>
    <variation>L</variation>
    <location>
        <position position="61"/>
    </location>
</feature>
<gene>
    <name type="primary">KRAS</name>
</gene>
<name>RASK_MONDO</name>
<organism>
    <name type="scientific">Monodelphis domestica</name>
    <name type="common">Gray short-tailed opossum</name>
    <dbReference type="NCBI Taxonomy" id="13616"/>
    <lineage>
        <taxon>Eukaryota</taxon>
        <taxon>Metazoa</taxon>
        <taxon>Chordata</taxon>
        <taxon>Craniata</taxon>
        <taxon>Vertebrata</taxon>
        <taxon>Euteleostomi</taxon>
        <taxon>Mammalia</taxon>
        <taxon>Metatheria</taxon>
        <taxon>Didelphimorphia</taxon>
        <taxon>Didelphidae</taxon>
        <taxon>Monodelphis</taxon>
    </lineage>
</organism>
<comment type="function">
    <text evidence="1 4">Ras proteins bind GDP/GTP and possess intrinsic GTPase activity (By similarity). Plays an important role in the regulation of cell proliferation (PubMed:8312604). Plays a role in promoting oncogenic events by inducing transcriptional silencing of tumor suppressor genes (TSGs) in colorectal cancer (CRC) cells in a ZNF304-dependent manner (By similarity).</text>
</comment>
<comment type="catalytic activity">
    <reaction evidence="1">
        <text>GTP + H2O = GDP + phosphate + H(+)</text>
        <dbReference type="Rhea" id="RHEA:19669"/>
        <dbReference type="ChEBI" id="CHEBI:15377"/>
        <dbReference type="ChEBI" id="CHEBI:15378"/>
        <dbReference type="ChEBI" id="CHEBI:37565"/>
        <dbReference type="ChEBI" id="CHEBI:43474"/>
        <dbReference type="ChEBI" id="CHEBI:58189"/>
        <dbReference type="EC" id="3.6.5.2"/>
    </reaction>
</comment>
<comment type="activity regulation">
    <text evidence="1">Alternates between an inactive form bound to GDP and an active form bound to GTP (By similarity). Activated by a guanine nucleotide-exchange factor (GEF) and inactivated by a GTPase-activating protein (GAP) (By similarity). Interaction with SOS1 promotes exchange of bound GDP to GTP (By similarity).</text>
</comment>
<comment type="subunit">
    <text evidence="1 2">Interacts with PHLPP (By similarity). Interacts (active GTP-bound form preferentially) with RGS14 (By similarity). Interacts (when farnesylated) with PDE6D; this promotes dissociation from the cell membrane (By similarity). Interacts with SOS1 (By similarity). Interacts (when farnesylated) with GPR31 (By similarity). Interacts with RAP1GDS1 (By similarity). Interacts (active GTP-bound form) with both SHOC2 and PP1c (all isoforms) to form a tertiary complex; SHOC2 and PP1c preferably bind M-Ras/MRAS, but they also bind K-Ras/KRAS, N-Ras/NRAS and H-Ras/HRAS (By similarity). Interacts (GTP-bound form) with MAPKAP1/SIN1; inhibiting K-Ras/KRAS activity (By similarity).</text>
</comment>
<comment type="subcellular location">
    <subcellularLocation>
        <location evidence="1">Cell membrane</location>
        <topology evidence="1">Lipid-anchor</topology>
        <orientation evidence="1">Cytoplasmic side</orientation>
    </subcellularLocation>
    <subcellularLocation>
        <location evidence="1">Cytoplasm</location>
        <location evidence="1">Cytosol</location>
    </subcellularLocation>
</comment>
<comment type="PTM">
    <text evidence="1">Acetylation at Lys-104 prevents interaction with guanine nucleotide exchange factors (GEFs).</text>
</comment>
<comment type="disease">
    <text evidence="4">Mutation which changes position 61 is implicated in ultraviolet radiation-induced (UVR-induced) eye tumor.</text>
</comment>
<comment type="similarity">
    <text evidence="5">Belongs to the small GTPase superfamily. Ras family.</text>
</comment>
<proteinExistence type="evidence at protein level"/>
<reference key="1">
    <citation type="journal article" date="1993" name="DNA Seq.">
        <title>Characterization of the K-ras gene of the marsupial Monodelphis domestica.</title>
        <authorList>
            <person name="Kusewitt D.F."/>
            <person name="Kelly G."/>
            <person name="Sabourin C.L.K."/>
            <person name="Ley R.D."/>
        </authorList>
    </citation>
    <scope>NUCLEOTIDE SEQUENCE [MRNA]</scope>
    <source>
        <tissue>Eye</tissue>
    </source>
</reference>
<sequence length="188" mass="21396">MTEYKLVVVGAGGVGKSALTIQLIQNHFVDEYDPTIEDSYRKQVVIDGETCLLDILDTAGQEEYSAMRDQYMRTGEGFLCVFAINNTKSFEDIHHYREQIKRVKDSEDVPMVLVGNKCDLPSRTVDTKQAQDLARSYGIPFIETSAKTRQGGDDAFYTLVREIRKHKEKMSKDGKKKKKKSKTKCIIM</sequence>
<evidence type="ECO:0000250" key="1">
    <source>
        <dbReference type="UniProtKB" id="P01116"/>
    </source>
</evidence>
<evidence type="ECO:0000250" key="2">
    <source>
        <dbReference type="UniProtKB" id="P08644"/>
    </source>
</evidence>
<evidence type="ECO:0000256" key="3">
    <source>
        <dbReference type="SAM" id="MobiDB-lite"/>
    </source>
</evidence>
<evidence type="ECO:0000269" key="4">
    <source>
    </source>
</evidence>
<evidence type="ECO:0000305" key="5"/>
<protein>
    <recommendedName>
        <fullName>GTPase KRas</fullName>
        <ecNumber evidence="1">3.6.5.2</ecNumber>
    </recommendedName>
    <alternativeName>
        <fullName>K-Ras 2</fullName>
    </alternativeName>
    <alternativeName>
        <fullName>Ki-Ras</fullName>
    </alternativeName>
    <alternativeName>
        <fullName>c-K-ras</fullName>
    </alternativeName>
    <alternativeName>
        <fullName>c-Ki-ras</fullName>
    </alternativeName>
    <component>
        <recommendedName>
            <fullName>GTPase KRas, N-terminally processed</fullName>
        </recommendedName>
    </component>
</protein>